<feature type="chain" id="PRO_1000072903" description="Transcriptional regulator MraZ">
    <location>
        <begin position="1"/>
        <end position="143"/>
    </location>
</feature>
<feature type="domain" description="SpoVT-AbrB 1" evidence="2">
    <location>
        <begin position="5"/>
        <end position="47"/>
    </location>
</feature>
<feature type="domain" description="SpoVT-AbrB 2" evidence="2">
    <location>
        <begin position="76"/>
        <end position="119"/>
    </location>
</feature>
<reference key="1">
    <citation type="journal article" date="2008" name="J. Bacteriol.">
        <title>Genome sequence of Staphylococcus aureus strain Newman and comparative analysis of staphylococcal genomes: polymorphism and evolution of two major pathogenicity islands.</title>
        <authorList>
            <person name="Baba T."/>
            <person name="Bae T."/>
            <person name="Schneewind O."/>
            <person name="Takeuchi F."/>
            <person name="Hiramatsu K."/>
        </authorList>
    </citation>
    <scope>NUCLEOTIDE SEQUENCE [LARGE SCALE GENOMIC DNA]</scope>
    <source>
        <strain>Newman</strain>
    </source>
</reference>
<protein>
    <recommendedName>
        <fullName>Transcriptional regulator MraZ</fullName>
    </recommendedName>
</protein>
<comment type="subunit">
    <text evidence="1">Forms oligomers.</text>
</comment>
<comment type="subcellular location">
    <subcellularLocation>
        <location evidence="1">Cytoplasm</location>
        <location evidence="1">Nucleoid</location>
    </subcellularLocation>
</comment>
<comment type="similarity">
    <text evidence="1">Belongs to the MraZ family.</text>
</comment>
<organism>
    <name type="scientific">Staphylococcus aureus (strain Newman)</name>
    <dbReference type="NCBI Taxonomy" id="426430"/>
    <lineage>
        <taxon>Bacteria</taxon>
        <taxon>Bacillati</taxon>
        <taxon>Bacillota</taxon>
        <taxon>Bacilli</taxon>
        <taxon>Bacillales</taxon>
        <taxon>Staphylococcaceae</taxon>
        <taxon>Staphylococcus</taxon>
    </lineage>
</organism>
<proteinExistence type="inferred from homology"/>
<keyword id="KW-0963">Cytoplasm</keyword>
<keyword id="KW-0238">DNA-binding</keyword>
<keyword id="KW-0677">Repeat</keyword>
<keyword id="KW-0804">Transcription</keyword>
<keyword id="KW-0805">Transcription regulation</keyword>
<name>MRAZ_STAAE</name>
<dbReference type="EMBL" id="AP009351">
    <property type="protein sequence ID" value="BAF67360.1"/>
    <property type="molecule type" value="Genomic_DNA"/>
</dbReference>
<dbReference type="RefSeq" id="WP_000480800.1">
    <property type="nucleotide sequence ID" value="NZ_JBBIAE010000001.1"/>
</dbReference>
<dbReference type="SMR" id="A6QG78"/>
<dbReference type="GeneID" id="66839371"/>
<dbReference type="KEGG" id="sae:NWMN_1088"/>
<dbReference type="HOGENOM" id="CLU_107907_0_5_9"/>
<dbReference type="Proteomes" id="UP000006386">
    <property type="component" value="Chromosome"/>
</dbReference>
<dbReference type="GO" id="GO:0005737">
    <property type="term" value="C:cytoplasm"/>
    <property type="evidence" value="ECO:0007669"/>
    <property type="project" value="UniProtKB-UniRule"/>
</dbReference>
<dbReference type="GO" id="GO:0009295">
    <property type="term" value="C:nucleoid"/>
    <property type="evidence" value="ECO:0007669"/>
    <property type="project" value="UniProtKB-SubCell"/>
</dbReference>
<dbReference type="GO" id="GO:0003700">
    <property type="term" value="F:DNA-binding transcription factor activity"/>
    <property type="evidence" value="ECO:0007669"/>
    <property type="project" value="UniProtKB-UniRule"/>
</dbReference>
<dbReference type="GO" id="GO:0000976">
    <property type="term" value="F:transcription cis-regulatory region binding"/>
    <property type="evidence" value="ECO:0007669"/>
    <property type="project" value="TreeGrafter"/>
</dbReference>
<dbReference type="GO" id="GO:2000143">
    <property type="term" value="P:negative regulation of DNA-templated transcription initiation"/>
    <property type="evidence" value="ECO:0007669"/>
    <property type="project" value="TreeGrafter"/>
</dbReference>
<dbReference type="CDD" id="cd16321">
    <property type="entry name" value="MraZ_C"/>
    <property type="match status" value="1"/>
</dbReference>
<dbReference type="CDD" id="cd16320">
    <property type="entry name" value="MraZ_N"/>
    <property type="match status" value="1"/>
</dbReference>
<dbReference type="FunFam" id="3.40.1550.20:FF:000002">
    <property type="entry name" value="Transcriptional regulator MraZ"/>
    <property type="match status" value="1"/>
</dbReference>
<dbReference type="Gene3D" id="3.40.1550.20">
    <property type="entry name" value="Transcriptional regulator MraZ domain"/>
    <property type="match status" value="1"/>
</dbReference>
<dbReference type="HAMAP" id="MF_01008">
    <property type="entry name" value="MraZ"/>
    <property type="match status" value="1"/>
</dbReference>
<dbReference type="InterPro" id="IPR003444">
    <property type="entry name" value="MraZ"/>
</dbReference>
<dbReference type="InterPro" id="IPR035644">
    <property type="entry name" value="MraZ_C"/>
</dbReference>
<dbReference type="InterPro" id="IPR020603">
    <property type="entry name" value="MraZ_dom"/>
</dbReference>
<dbReference type="InterPro" id="IPR035642">
    <property type="entry name" value="MraZ_N"/>
</dbReference>
<dbReference type="InterPro" id="IPR038619">
    <property type="entry name" value="MraZ_sf"/>
</dbReference>
<dbReference type="InterPro" id="IPR007159">
    <property type="entry name" value="SpoVT-AbrB_dom"/>
</dbReference>
<dbReference type="InterPro" id="IPR037914">
    <property type="entry name" value="SpoVT-AbrB_sf"/>
</dbReference>
<dbReference type="NCBIfam" id="TIGR00242">
    <property type="entry name" value="division/cell wall cluster transcriptional repressor MraZ"/>
    <property type="match status" value="1"/>
</dbReference>
<dbReference type="PANTHER" id="PTHR34701">
    <property type="entry name" value="TRANSCRIPTIONAL REGULATOR MRAZ"/>
    <property type="match status" value="1"/>
</dbReference>
<dbReference type="PANTHER" id="PTHR34701:SF1">
    <property type="entry name" value="TRANSCRIPTIONAL REGULATOR MRAZ"/>
    <property type="match status" value="1"/>
</dbReference>
<dbReference type="Pfam" id="PF02381">
    <property type="entry name" value="MraZ"/>
    <property type="match status" value="2"/>
</dbReference>
<dbReference type="SUPFAM" id="SSF89447">
    <property type="entry name" value="AbrB/MazE/MraZ-like"/>
    <property type="match status" value="1"/>
</dbReference>
<dbReference type="PROSITE" id="PS51740">
    <property type="entry name" value="SPOVT_ABRB"/>
    <property type="match status" value="2"/>
</dbReference>
<gene>
    <name evidence="1" type="primary">mraZ</name>
    <name type="ordered locus">NWMN_1088</name>
</gene>
<evidence type="ECO:0000255" key="1">
    <source>
        <dbReference type="HAMAP-Rule" id="MF_01008"/>
    </source>
</evidence>
<evidence type="ECO:0000255" key="2">
    <source>
        <dbReference type="PROSITE-ProRule" id="PRU01076"/>
    </source>
</evidence>
<accession>A6QG78</accession>
<sequence length="143" mass="17238">MFMGEYDHQLDTKGRMIIPSKFRYDLNERFIITRGLDKCLFGYTLDEWQQIEEKMKTLPMTKKDARKFMRMFFSGAVEVELDKQGRINIPQNLRKYANLTKECTVIGVSNRIEIWDRETWNDFYEESEESFEDIAEDLIDFDF</sequence>